<keyword id="KW-0002">3D-structure</keyword>
<keyword id="KW-1035">Host cytoplasm</keyword>
<keyword id="KW-1048">Host nucleus</keyword>
<keyword id="KW-0945">Host-virus interaction</keyword>
<keyword id="KW-1185">Reference proteome</keyword>
<keyword id="KW-0468">Viral matrix protein</keyword>
<keyword id="KW-0946">Virion</keyword>
<organism>
    <name type="scientific">Hendra virus (isolate Horse/Autralia/Hendra/1994)</name>
    <dbReference type="NCBI Taxonomy" id="928303"/>
    <lineage>
        <taxon>Viruses</taxon>
        <taxon>Riboviria</taxon>
        <taxon>Orthornavirae</taxon>
        <taxon>Negarnaviricota</taxon>
        <taxon>Haploviricotina</taxon>
        <taxon>Monjiviricetes</taxon>
        <taxon>Mononegavirales</taxon>
        <taxon>Paramyxoviridae</taxon>
        <taxon>Orthoparamyxovirinae</taxon>
        <taxon>Henipavirus</taxon>
        <taxon>Henipavirus hendraense</taxon>
    </lineage>
</organism>
<dbReference type="EMBL" id="U49404">
    <property type="protein sequence ID" value="AAB39504.1"/>
    <property type="molecule type" value="Genomic_RNA"/>
</dbReference>
<dbReference type="EMBL" id="AF017149">
    <property type="protein sequence ID" value="AAC83191.2"/>
    <property type="molecule type" value="Genomic_RNA"/>
</dbReference>
<dbReference type="PIR" id="T08209">
    <property type="entry name" value="T08209"/>
</dbReference>
<dbReference type="PDB" id="6BK6">
    <property type="method" value="X-ray"/>
    <property type="resolution" value="2.50 A"/>
    <property type="chains" value="A=1-352"/>
</dbReference>
<dbReference type="PDB" id="8FUA">
    <property type="method" value="X-ray"/>
    <property type="resolution" value="1.90 A"/>
    <property type="chains" value="B/C=80-99"/>
</dbReference>
<dbReference type="PDB" id="8FUB">
    <property type="method" value="X-ray"/>
    <property type="resolution" value="2.75 A"/>
    <property type="chains" value="B=80-99"/>
</dbReference>
<dbReference type="PDB" id="8FUC">
    <property type="method" value="X-ray"/>
    <property type="resolution" value="2.10 A"/>
    <property type="chains" value="A=243-260"/>
</dbReference>
<dbReference type="PDBsum" id="6BK6"/>
<dbReference type="PDBsum" id="8FUA"/>
<dbReference type="PDBsum" id="8FUB"/>
<dbReference type="PDBsum" id="8FUC"/>
<dbReference type="SMR" id="O89341"/>
<dbReference type="KEGG" id="vg:1446472"/>
<dbReference type="Proteomes" id="UP000008771">
    <property type="component" value="Segment"/>
</dbReference>
<dbReference type="GO" id="GO:0030430">
    <property type="term" value="C:host cell cytoplasm"/>
    <property type="evidence" value="ECO:0007669"/>
    <property type="project" value="UniProtKB-SubCell"/>
</dbReference>
<dbReference type="GO" id="GO:0042025">
    <property type="term" value="C:host cell nucleus"/>
    <property type="evidence" value="ECO:0007669"/>
    <property type="project" value="UniProtKB-SubCell"/>
</dbReference>
<dbReference type="GO" id="GO:0044423">
    <property type="term" value="C:virion component"/>
    <property type="evidence" value="ECO:0007669"/>
    <property type="project" value="UniProtKB-KW"/>
</dbReference>
<dbReference type="GO" id="GO:0039660">
    <property type="term" value="F:structural constituent of virion"/>
    <property type="evidence" value="ECO:0007669"/>
    <property type="project" value="UniProtKB-KW"/>
</dbReference>
<dbReference type="GO" id="GO:0019068">
    <property type="term" value="P:virion assembly"/>
    <property type="evidence" value="ECO:0007669"/>
    <property type="project" value="InterPro"/>
</dbReference>
<dbReference type="Gene3D" id="2.70.20.60">
    <property type="entry name" value="Viral matrix protein, C-terminal domain"/>
    <property type="match status" value="1"/>
</dbReference>
<dbReference type="Gene3D" id="2.70.20.50">
    <property type="entry name" value="Viral matrix protein, N-terminal domain"/>
    <property type="match status" value="1"/>
</dbReference>
<dbReference type="InterPro" id="IPR042539">
    <property type="entry name" value="Matrix_C"/>
</dbReference>
<dbReference type="InterPro" id="IPR042540">
    <property type="entry name" value="Matrix_N"/>
</dbReference>
<dbReference type="InterPro" id="IPR055413">
    <property type="entry name" value="Matrix_Paramyxo_C"/>
</dbReference>
<dbReference type="InterPro" id="IPR000982">
    <property type="entry name" value="Matrix_Paramyxo_N"/>
</dbReference>
<dbReference type="Pfam" id="PF23765">
    <property type="entry name" value="Matrix_Paramyxo_C"/>
    <property type="match status" value="1"/>
</dbReference>
<dbReference type="Pfam" id="PF00661">
    <property type="entry name" value="Matrix_Paramyxo_N"/>
    <property type="match status" value="1"/>
</dbReference>
<accession>O89341</accession>
<accession>Q66760</accession>
<gene>
    <name type="primary">M</name>
</gene>
<proteinExistence type="evidence at protein level"/>
<sequence>MDFSVSDNLDDPIEGVSDFSPTSWENGGYLDKVEPEIDKHGSMIPKYKIYTPGANERKFNNYMYMICYGFVEDVERSPESGKRKKIRTIAAYPLGVGKSTSHPQDLLEELCSLKVTVRRTAGATEKIVFGSSGPLHHLLPWKKILTGGSIFNAVKVCRNVDQIQLENQQSLRIFFLSITKLNDSGIYMIPRTMLEFRRNNAIAFNLLVYLKIDADLAKAGIQGSFDKDGTKVASFMLHLGNFVRRAGKYYSVEYCKRKIDRMKLQFSLGSIGGLSLHIKINGVISKRLFAQMGFQKNLCFSLMDINPWLNRLTWNNSCEISRVAAVLQPSVPREFMIYDDVFIDNTGKILKG</sequence>
<reference key="1">
    <citation type="journal article" date="1996" name="Virus Res.">
        <title>Comparison of the deduced matrix and fusion protein sequences of equine morbillivirus with cognate genes of the Paramyxoviridae.</title>
        <authorList>
            <person name="Gould A.R."/>
        </authorList>
    </citation>
    <scope>NUCLEOTIDE SEQUENCE [GENOMIC RNA]</scope>
</reference>
<reference key="2">
    <citation type="journal article" date="2000" name="J. Virol.">
        <title>The exceptionally large genome of Hendra virus: support for creation of a new genus within the family Paramyxoviridae.</title>
        <authorList>
            <person name="Wang L.-F."/>
            <person name="Yu M."/>
            <person name="Hansson E."/>
            <person name="Pritchard L.I."/>
            <person name="Shiell B."/>
            <person name="Michalski W.P."/>
            <person name="Eaton B.T."/>
        </authorList>
    </citation>
    <scope>NUCLEOTIDE SEQUENCE [GENOMIC RNA]</scope>
</reference>
<reference key="3">
    <citation type="journal article" date="2014" name="PLoS ONE">
        <title>ANP32B is a nuclear target of henipavirus M proteins.</title>
        <authorList>
            <person name="Bauer A."/>
            <person name="Neumann S."/>
            <person name="Karger A."/>
            <person name="Henning A.K."/>
            <person name="Maisner A."/>
            <person name="Lamp B."/>
            <person name="Dietzel E."/>
            <person name="Kwasnitschka L."/>
            <person name="Balkema-Buschmann A."/>
            <person name="Keil G.M."/>
            <person name="Finke S."/>
        </authorList>
    </citation>
    <scope>INTERACTION WITH HOST ANP32B</scope>
    <scope>SUBCELLULAR LOCATION</scope>
</reference>
<organismHost>
    <name type="scientific">Equus caballus</name>
    <name type="common">Horse</name>
    <dbReference type="NCBI Taxonomy" id="9796"/>
</organismHost>
<organismHost>
    <name type="scientific">Homo sapiens</name>
    <name type="common">Human</name>
    <dbReference type="NCBI Taxonomy" id="9606"/>
</organismHost>
<organismHost>
    <name type="scientific">Pteropus alecto</name>
    <name type="common">Black flying fox</name>
    <dbReference type="NCBI Taxonomy" id="9402"/>
</organismHost>
<organismHost>
    <name type="scientific">Pteropus poliocephalus</name>
    <name type="common">Grey-headed flying fox</name>
    <dbReference type="NCBI Taxonomy" id="9403"/>
</organismHost>
<organismHost>
    <name type="scientific">Pteropus scapulatus</name>
    <name type="common">Little red flying fox</name>
    <dbReference type="NCBI Taxonomy" id="94117"/>
</organismHost>
<feature type="chain" id="PRO_0000236000" description="Matrix protein">
    <location>
        <begin position="1"/>
        <end position="352"/>
    </location>
</feature>
<feature type="region of interest" description="Disordered" evidence="2">
    <location>
        <begin position="1"/>
        <end position="20"/>
    </location>
</feature>
<feature type="sequence conflict" description="In Ref. 1; AAB39504." evidence="4" ref="1">
    <original>K</original>
    <variation>N</variation>
    <location>
        <position position="84"/>
    </location>
</feature>
<feature type="sequence conflict" description="In Ref. 1; AAB39504." evidence="4" ref="1">
    <original>PQDLLEELCS</original>
    <variation>RCEDPFRRAMF</variation>
    <location>
        <begin position="103"/>
        <end position="112"/>
    </location>
</feature>
<feature type="sequence conflict" description="In Ref. 1; AAB39504." evidence="4" ref="1">
    <original>E</original>
    <variation>Y</variation>
    <location>
        <position position="125"/>
    </location>
</feature>
<feature type="sequence conflict" description="In Ref. 1; AAB39504." evidence="4" ref="1">
    <original>N</original>
    <variation>K</variation>
    <location>
        <position position="167"/>
    </location>
</feature>
<feature type="strand" evidence="5">
    <location>
        <begin position="46"/>
        <end position="50"/>
    </location>
</feature>
<feature type="helix" evidence="5">
    <location>
        <begin position="54"/>
        <end position="56"/>
    </location>
</feature>
<feature type="strand" evidence="5">
    <location>
        <begin position="62"/>
        <end position="73"/>
    </location>
</feature>
<feature type="strand" evidence="5">
    <location>
        <begin position="86"/>
        <end position="98"/>
    </location>
</feature>
<feature type="helix" evidence="5">
    <location>
        <begin position="103"/>
        <end position="111"/>
    </location>
</feature>
<feature type="strand" evidence="5">
    <location>
        <begin position="113"/>
        <end position="133"/>
    </location>
</feature>
<feature type="helix" evidence="5">
    <location>
        <begin position="139"/>
        <end position="141"/>
    </location>
</feature>
<feature type="helix" evidence="5">
    <location>
        <begin position="142"/>
        <end position="146"/>
    </location>
</feature>
<feature type="strand" evidence="5">
    <location>
        <begin position="149"/>
        <end position="152"/>
    </location>
</feature>
<feature type="helix" evidence="5">
    <location>
        <begin position="153"/>
        <end position="156"/>
    </location>
</feature>
<feature type="helix" evidence="5">
    <location>
        <begin position="160"/>
        <end position="162"/>
    </location>
</feature>
<feature type="strand" evidence="5">
    <location>
        <begin position="165"/>
        <end position="167"/>
    </location>
</feature>
<feature type="strand" evidence="5">
    <location>
        <begin position="169"/>
        <end position="184"/>
    </location>
</feature>
<feature type="helix" evidence="5">
    <location>
        <begin position="191"/>
        <end position="194"/>
    </location>
</feature>
<feature type="strand" evidence="5">
    <location>
        <begin position="201"/>
        <end position="211"/>
    </location>
</feature>
<feature type="strand" evidence="5">
    <location>
        <begin position="232"/>
        <end position="243"/>
    </location>
</feature>
<feature type="helix" evidence="5">
    <location>
        <begin position="252"/>
        <end position="260"/>
    </location>
</feature>
<feature type="strand" evidence="5">
    <location>
        <begin position="264"/>
        <end position="269"/>
    </location>
</feature>
<feature type="helix" evidence="5">
    <location>
        <begin position="271"/>
        <end position="273"/>
    </location>
</feature>
<feature type="strand" evidence="5">
    <location>
        <begin position="275"/>
        <end position="280"/>
    </location>
</feature>
<feature type="helix" evidence="5">
    <location>
        <begin position="286"/>
        <end position="291"/>
    </location>
</feature>
<feature type="turn" evidence="5">
    <location>
        <begin position="292"/>
        <end position="294"/>
    </location>
</feature>
<feature type="strand" evidence="5">
    <location>
        <begin position="296"/>
        <end position="301"/>
    </location>
</feature>
<feature type="helix" evidence="5">
    <location>
        <begin position="302"/>
        <end position="305"/>
    </location>
</feature>
<feature type="helix" evidence="5">
    <location>
        <begin position="307"/>
        <end position="311"/>
    </location>
</feature>
<feature type="turn" evidence="5">
    <location>
        <begin position="312"/>
        <end position="315"/>
    </location>
</feature>
<feature type="strand" evidence="5">
    <location>
        <begin position="319"/>
        <end position="332"/>
    </location>
</feature>
<feature type="helix" evidence="5">
    <location>
        <begin position="333"/>
        <end position="335"/>
    </location>
</feature>
<feature type="strand" evidence="5">
    <location>
        <begin position="341"/>
        <end position="343"/>
    </location>
</feature>
<feature type="strand" evidence="5">
    <location>
        <begin position="347"/>
        <end position="349"/>
    </location>
</feature>
<name>MATRX_HENDH</name>
<protein>
    <recommendedName>
        <fullName>Matrix protein</fullName>
        <shortName>Protein M</shortName>
    </recommendedName>
</protein>
<comment type="function">
    <text evidence="1">Plays a crucial role in virion assembly and budding. Forms a shell at the inner face of the plasma membrane (By similarity).</text>
</comment>
<comment type="subunit">
    <text evidence="3">Homomultimer. Interacts with host ANP32B; this interaction promotes M nuclear localization.</text>
</comment>
<comment type="subcellular location">
    <subcellularLocation>
        <location>Virion</location>
    </subcellularLocation>
    <subcellularLocation>
        <location>Host cytoplasm</location>
    </subcellularLocation>
    <subcellularLocation>
        <location evidence="3">Host nucleus</location>
    </subcellularLocation>
    <text evidence="1">During bud formation, associates at the inner side of the plasma membrane of infected cells.</text>
</comment>
<comment type="similarity">
    <text evidence="4">Belongs to the morbillivirus/respirovirus/rubulavirus M protein family.</text>
</comment>
<evidence type="ECO:0000250" key="1"/>
<evidence type="ECO:0000256" key="2">
    <source>
        <dbReference type="SAM" id="MobiDB-lite"/>
    </source>
</evidence>
<evidence type="ECO:0000269" key="3">
    <source>
    </source>
</evidence>
<evidence type="ECO:0000305" key="4"/>
<evidence type="ECO:0007829" key="5">
    <source>
        <dbReference type="PDB" id="6BK6"/>
    </source>
</evidence>